<keyword id="KW-0028">Amino-acid biosynthesis</keyword>
<keyword id="KW-0057">Aromatic amino acid biosynthesis</keyword>
<keyword id="KW-0210">Decarboxylase</keyword>
<keyword id="KW-0413">Isomerase</keyword>
<keyword id="KW-0456">Lyase</keyword>
<keyword id="KW-0511">Multifunctional enzyme</keyword>
<keyword id="KW-1185">Reference proteome</keyword>
<keyword id="KW-0822">Tryptophan biosynthesis</keyword>
<protein>
    <recommendedName>
        <fullName>Tryptophan biosynthesis protein TrpCF</fullName>
    </recommendedName>
    <domain>
        <recommendedName>
            <fullName>Indole-3-glycerol phosphate synthase</fullName>
            <shortName>IGPS</shortName>
            <ecNumber>4.1.1.48</ecNumber>
        </recommendedName>
    </domain>
    <domain>
        <recommendedName>
            <fullName>N-(5'-phospho-ribosyl)anthranilate isomerase</fullName>
            <shortName>PRAI</shortName>
            <ecNumber>5.3.1.24</ecNumber>
        </recommendedName>
    </domain>
</protein>
<comment type="function">
    <text evidence="1">Bifunctional enzyme that catalyzes two sequential steps of tryptophan biosynthetic pathway. The first reaction is catalyzed by the isomerase, coded by the TrpF domain; the second reaction is catalyzed by the synthase, coded by the TrpC domain (By similarity).</text>
</comment>
<comment type="catalytic activity">
    <reaction>
        <text>N-(5-phospho-beta-D-ribosyl)anthranilate = 1-(2-carboxyphenylamino)-1-deoxy-D-ribulose 5-phosphate</text>
        <dbReference type="Rhea" id="RHEA:21540"/>
        <dbReference type="ChEBI" id="CHEBI:18277"/>
        <dbReference type="ChEBI" id="CHEBI:58613"/>
        <dbReference type="EC" id="5.3.1.24"/>
    </reaction>
</comment>
<comment type="catalytic activity">
    <reaction>
        <text>1-(2-carboxyphenylamino)-1-deoxy-D-ribulose 5-phosphate + H(+) = (1S,2R)-1-C-(indol-3-yl)glycerol 3-phosphate + CO2 + H2O</text>
        <dbReference type="Rhea" id="RHEA:23476"/>
        <dbReference type="ChEBI" id="CHEBI:15377"/>
        <dbReference type="ChEBI" id="CHEBI:15378"/>
        <dbReference type="ChEBI" id="CHEBI:16526"/>
        <dbReference type="ChEBI" id="CHEBI:58613"/>
        <dbReference type="ChEBI" id="CHEBI:58866"/>
        <dbReference type="EC" id="4.1.1.48"/>
    </reaction>
</comment>
<comment type="pathway">
    <text>Amino-acid biosynthesis; L-tryptophan biosynthesis; L-tryptophan from chorismate: step 3/5.</text>
</comment>
<comment type="pathway">
    <text>Amino-acid biosynthesis; L-tryptophan biosynthesis; L-tryptophan from chorismate: step 4/5.</text>
</comment>
<comment type="subunit">
    <text evidence="1">Monomer.</text>
</comment>
<comment type="similarity">
    <text evidence="2">In the N-terminal section; belongs to the TrpC family.</text>
</comment>
<comment type="similarity">
    <text evidence="2">In the C-terminal section; belongs to the TrpF family.</text>
</comment>
<evidence type="ECO:0000250" key="1"/>
<evidence type="ECO:0000305" key="2"/>
<reference key="1">
    <citation type="journal article" date="2001" name="Nature">
        <title>Genome sequence of Yersinia pestis, the causative agent of plague.</title>
        <authorList>
            <person name="Parkhill J."/>
            <person name="Wren B.W."/>
            <person name="Thomson N.R."/>
            <person name="Titball R.W."/>
            <person name="Holden M.T.G."/>
            <person name="Prentice M.B."/>
            <person name="Sebaihia M."/>
            <person name="James K.D."/>
            <person name="Churcher C.M."/>
            <person name="Mungall K.L."/>
            <person name="Baker S."/>
            <person name="Basham D."/>
            <person name="Bentley S.D."/>
            <person name="Brooks K."/>
            <person name="Cerdeno-Tarraga A.-M."/>
            <person name="Chillingworth T."/>
            <person name="Cronin A."/>
            <person name="Davies R.M."/>
            <person name="Davis P."/>
            <person name="Dougan G."/>
            <person name="Feltwell T."/>
            <person name="Hamlin N."/>
            <person name="Holroyd S."/>
            <person name="Jagels K."/>
            <person name="Karlyshev A.V."/>
            <person name="Leather S."/>
            <person name="Moule S."/>
            <person name="Oyston P.C.F."/>
            <person name="Quail M.A."/>
            <person name="Rutherford K.M."/>
            <person name="Simmonds M."/>
            <person name="Skelton J."/>
            <person name="Stevens K."/>
            <person name="Whitehead S."/>
            <person name="Barrell B.G."/>
        </authorList>
    </citation>
    <scope>NUCLEOTIDE SEQUENCE [LARGE SCALE GENOMIC DNA]</scope>
    <source>
        <strain>CO-92 / Biovar Orientalis</strain>
    </source>
</reference>
<reference key="2">
    <citation type="journal article" date="2002" name="J. Bacteriol.">
        <title>Genome sequence of Yersinia pestis KIM.</title>
        <authorList>
            <person name="Deng W."/>
            <person name="Burland V."/>
            <person name="Plunkett G. III"/>
            <person name="Boutin A."/>
            <person name="Mayhew G.F."/>
            <person name="Liss P."/>
            <person name="Perna N.T."/>
            <person name="Rose D.J."/>
            <person name="Mau B."/>
            <person name="Zhou S."/>
            <person name="Schwartz D.C."/>
            <person name="Fetherston J.D."/>
            <person name="Lindler L.E."/>
            <person name="Brubaker R.R."/>
            <person name="Plano G.V."/>
            <person name="Straley S.C."/>
            <person name="McDonough K.A."/>
            <person name="Nilles M.L."/>
            <person name="Matson J.S."/>
            <person name="Blattner F.R."/>
            <person name="Perry R.D."/>
        </authorList>
    </citation>
    <scope>NUCLEOTIDE SEQUENCE [LARGE SCALE GENOMIC DNA]</scope>
    <source>
        <strain>KIM10+ / Biovar Mediaevalis</strain>
    </source>
</reference>
<reference key="3">
    <citation type="journal article" date="2004" name="DNA Res.">
        <title>Complete genome sequence of Yersinia pestis strain 91001, an isolate avirulent to humans.</title>
        <authorList>
            <person name="Song Y."/>
            <person name="Tong Z."/>
            <person name="Wang J."/>
            <person name="Wang L."/>
            <person name="Guo Z."/>
            <person name="Han Y."/>
            <person name="Zhang J."/>
            <person name="Pei D."/>
            <person name="Zhou D."/>
            <person name="Qin H."/>
            <person name="Pang X."/>
            <person name="Han Y."/>
            <person name="Zhai J."/>
            <person name="Li M."/>
            <person name="Cui B."/>
            <person name="Qi Z."/>
            <person name="Jin L."/>
            <person name="Dai R."/>
            <person name="Chen F."/>
            <person name="Li S."/>
            <person name="Ye C."/>
            <person name="Du Z."/>
            <person name="Lin W."/>
            <person name="Wang J."/>
            <person name="Yu J."/>
            <person name="Yang H."/>
            <person name="Wang J."/>
            <person name="Huang P."/>
            <person name="Yang R."/>
        </authorList>
    </citation>
    <scope>NUCLEOTIDE SEQUENCE [LARGE SCALE GENOMIC DNA]</scope>
    <source>
        <strain>91001 / Biovar Mediaevalis</strain>
    </source>
</reference>
<sequence length="475" mass="52117">MQETGGYKTEGYNVGSDKVDSDKTKTVLHQIVHDKEIWVAARKLQQPLTRFQNEITQSQRDFYHALQGDKTVFILECKKASPSKGVIRDNFNPAEIAGVYKHYASAISVLTDEKYFQGSFDFLPQVSAAVTQPVLCKDFIIDAYQIQLARFYHADAILLMLSVLDDEAYRQLAAVAHSLNMGVLTEASNAEELERAITLGAKVVGINNRDLRDLSIDLNRTRELAPRLPEGVTIISESGISHYRQVRELSQFANGFLIGSALMSEPDLNAAVRRVLLGENKVCGLTRAQDAATAYHAGAVYGGLIFVDSSPRYVDIASARTVISGAPLKYVGVFRHAEIETVRQTAEQLSLAAVQLHGHEDQQYINQLRKVLPADCQIWKALSVGDTMPERNLQQVERYVLDHGTGGTGQRFDWSLLADQALDNVLLAGGLGPDNCDVAAQLGCAGLDVNSGVESAPGIKDPQRIAAVFQALRVY</sequence>
<feature type="chain" id="PRO_0000154287" description="Tryptophan biosynthesis protein TrpCF">
    <location>
        <begin position="1"/>
        <end position="475"/>
    </location>
</feature>
<feature type="region of interest" description="Indole-3-glycerol phosphate synthase">
    <location>
        <begin position="1"/>
        <end position="279"/>
    </location>
</feature>
<feature type="region of interest" description="N-(5'-phosphoribosyl)anthranilate isomerase">
    <location>
        <begin position="280"/>
        <end position="475"/>
    </location>
</feature>
<name>TRPC_YERPE</name>
<gene>
    <name type="primary">trpC</name>
    <name type="ordered locus">YPO2205</name>
    <name type="ordered locus">y2049</name>
    <name type="ordered locus">YP_2003</name>
</gene>
<organism>
    <name type="scientific">Yersinia pestis</name>
    <dbReference type="NCBI Taxonomy" id="632"/>
    <lineage>
        <taxon>Bacteria</taxon>
        <taxon>Pseudomonadati</taxon>
        <taxon>Pseudomonadota</taxon>
        <taxon>Gammaproteobacteria</taxon>
        <taxon>Enterobacterales</taxon>
        <taxon>Yersiniaceae</taxon>
        <taxon>Yersinia</taxon>
    </lineage>
</organism>
<proteinExistence type="inferred from homology"/>
<dbReference type="EC" id="4.1.1.48"/>
<dbReference type="EC" id="5.3.1.24"/>
<dbReference type="EMBL" id="AL590842">
    <property type="protein sequence ID" value="CAL20834.1"/>
    <property type="molecule type" value="Genomic_DNA"/>
</dbReference>
<dbReference type="EMBL" id="AE009952">
    <property type="protein sequence ID" value="AAM85614.1"/>
    <property type="molecule type" value="Genomic_DNA"/>
</dbReference>
<dbReference type="EMBL" id="AE017042">
    <property type="protein sequence ID" value="AAS62219.1"/>
    <property type="molecule type" value="Genomic_DNA"/>
</dbReference>
<dbReference type="PIR" id="AG0268">
    <property type="entry name" value="AG0268"/>
</dbReference>
<dbReference type="RefSeq" id="YP_002347176.1">
    <property type="nucleotide sequence ID" value="NC_003143.1"/>
</dbReference>
<dbReference type="SMR" id="Q8ZEG8"/>
<dbReference type="IntAct" id="Q8ZEG8">
    <property type="interactions" value="2"/>
</dbReference>
<dbReference type="STRING" id="214092.YPO2205"/>
<dbReference type="PaxDb" id="214092-YPO2205"/>
<dbReference type="DNASU" id="1146996"/>
<dbReference type="EnsemblBacteria" id="AAS62219">
    <property type="protein sequence ID" value="AAS62219"/>
    <property type="gene ID" value="YP_2003"/>
</dbReference>
<dbReference type="KEGG" id="ype:YPO2205"/>
<dbReference type="KEGG" id="ypk:y2049"/>
<dbReference type="KEGG" id="ypm:YP_2003"/>
<dbReference type="PATRIC" id="fig|214092.21.peg.2602"/>
<dbReference type="eggNOG" id="COG0134">
    <property type="taxonomic scope" value="Bacteria"/>
</dbReference>
<dbReference type="eggNOG" id="COG0135">
    <property type="taxonomic scope" value="Bacteria"/>
</dbReference>
<dbReference type="HOGENOM" id="CLU_007713_0_1_6"/>
<dbReference type="OMA" id="NVKTPFM"/>
<dbReference type="OrthoDB" id="9804217at2"/>
<dbReference type="UniPathway" id="UPA00035">
    <property type="reaction ID" value="UER00042"/>
</dbReference>
<dbReference type="UniPathway" id="UPA00035">
    <property type="reaction ID" value="UER00043"/>
</dbReference>
<dbReference type="Proteomes" id="UP000000815">
    <property type="component" value="Chromosome"/>
</dbReference>
<dbReference type="Proteomes" id="UP000001019">
    <property type="component" value="Chromosome"/>
</dbReference>
<dbReference type="Proteomes" id="UP000002490">
    <property type="component" value="Chromosome"/>
</dbReference>
<dbReference type="GO" id="GO:0004425">
    <property type="term" value="F:indole-3-glycerol-phosphate synthase activity"/>
    <property type="evidence" value="ECO:0000318"/>
    <property type="project" value="GO_Central"/>
</dbReference>
<dbReference type="GO" id="GO:0004640">
    <property type="term" value="F:phosphoribosylanthranilate isomerase activity"/>
    <property type="evidence" value="ECO:0000318"/>
    <property type="project" value="GO_Central"/>
</dbReference>
<dbReference type="GO" id="GO:0000162">
    <property type="term" value="P:L-tryptophan biosynthetic process"/>
    <property type="evidence" value="ECO:0000318"/>
    <property type="project" value="GO_Central"/>
</dbReference>
<dbReference type="CDD" id="cd00331">
    <property type="entry name" value="IGPS"/>
    <property type="match status" value="1"/>
</dbReference>
<dbReference type="CDD" id="cd00405">
    <property type="entry name" value="PRAI"/>
    <property type="match status" value="1"/>
</dbReference>
<dbReference type="FunFam" id="3.20.20.70:FF:000024">
    <property type="entry name" value="Indole-3-glycerol phosphate synthase"/>
    <property type="match status" value="1"/>
</dbReference>
<dbReference type="FunFam" id="3.20.20.70:FF:000165">
    <property type="entry name" value="Multifunctional fusion protein"/>
    <property type="match status" value="1"/>
</dbReference>
<dbReference type="Gene3D" id="3.20.20.70">
    <property type="entry name" value="Aldolase class I"/>
    <property type="match status" value="2"/>
</dbReference>
<dbReference type="HAMAP" id="MF_00134_B">
    <property type="entry name" value="IGPS_B"/>
    <property type="match status" value="1"/>
</dbReference>
<dbReference type="HAMAP" id="MF_00135">
    <property type="entry name" value="PRAI"/>
    <property type="match status" value="1"/>
</dbReference>
<dbReference type="InterPro" id="IPR013785">
    <property type="entry name" value="Aldolase_TIM"/>
</dbReference>
<dbReference type="InterPro" id="IPR045186">
    <property type="entry name" value="Indole-3-glycerol_P_synth"/>
</dbReference>
<dbReference type="InterPro" id="IPR013798">
    <property type="entry name" value="Indole-3-glycerol_P_synth_dom"/>
</dbReference>
<dbReference type="InterPro" id="IPR001468">
    <property type="entry name" value="Indole-3-GlycerolPSynthase_CS"/>
</dbReference>
<dbReference type="InterPro" id="IPR001240">
    <property type="entry name" value="PRAI_dom"/>
</dbReference>
<dbReference type="InterPro" id="IPR011060">
    <property type="entry name" value="RibuloseP-bd_barrel"/>
</dbReference>
<dbReference type="NCBIfam" id="NF001377">
    <property type="entry name" value="PRK00278.2-4"/>
    <property type="match status" value="1"/>
</dbReference>
<dbReference type="NCBIfam" id="NF006945">
    <property type="entry name" value="PRK09427.1"/>
    <property type="match status" value="1"/>
</dbReference>
<dbReference type="PANTHER" id="PTHR22854:SF2">
    <property type="entry name" value="INDOLE-3-GLYCEROL-PHOSPHATE SYNTHASE"/>
    <property type="match status" value="1"/>
</dbReference>
<dbReference type="PANTHER" id="PTHR22854">
    <property type="entry name" value="TRYPTOPHAN BIOSYNTHESIS PROTEIN"/>
    <property type="match status" value="1"/>
</dbReference>
<dbReference type="Pfam" id="PF00218">
    <property type="entry name" value="IGPS"/>
    <property type="match status" value="1"/>
</dbReference>
<dbReference type="Pfam" id="PF00697">
    <property type="entry name" value="PRAI"/>
    <property type="match status" value="1"/>
</dbReference>
<dbReference type="SUPFAM" id="SSF51366">
    <property type="entry name" value="Ribulose-phoshate binding barrel"/>
    <property type="match status" value="2"/>
</dbReference>
<dbReference type="PROSITE" id="PS00614">
    <property type="entry name" value="IGPS"/>
    <property type="match status" value="1"/>
</dbReference>
<accession>Q8ZEG8</accession>
<accession>Q0WEW2</accession>